<proteinExistence type="inferred from homology"/>
<evidence type="ECO:0000255" key="1">
    <source>
        <dbReference type="HAMAP-Rule" id="MF_00061"/>
    </source>
</evidence>
<keyword id="KW-0067">ATP-binding</keyword>
<keyword id="KW-0414">Isoprene biosynthesis</keyword>
<keyword id="KW-0418">Kinase</keyword>
<keyword id="KW-0547">Nucleotide-binding</keyword>
<keyword id="KW-1185">Reference proteome</keyword>
<keyword id="KW-0808">Transferase</keyword>
<feature type="chain" id="PRO_1000075044" description="4-diphosphocytidyl-2-C-methyl-D-erythritol kinase">
    <location>
        <begin position="1"/>
        <end position="280"/>
    </location>
</feature>
<feature type="active site" evidence="1">
    <location>
        <position position="8"/>
    </location>
</feature>
<feature type="active site" evidence="1">
    <location>
        <position position="133"/>
    </location>
</feature>
<feature type="binding site" evidence="1">
    <location>
        <begin position="91"/>
        <end position="101"/>
    </location>
    <ligand>
        <name>ATP</name>
        <dbReference type="ChEBI" id="CHEBI:30616"/>
    </ligand>
</feature>
<protein>
    <recommendedName>
        <fullName evidence="1">4-diphosphocytidyl-2-C-methyl-D-erythritol kinase</fullName>
        <shortName evidence="1">CMK</shortName>
        <ecNumber evidence="1">2.7.1.148</ecNumber>
    </recommendedName>
    <alternativeName>
        <fullName evidence="1">4-(cytidine-5'-diphospho)-2-C-methyl-D-erythritol kinase</fullName>
    </alternativeName>
</protein>
<comment type="function">
    <text evidence="1">Catalyzes the phosphorylation of the position 2 hydroxy group of 4-diphosphocytidyl-2C-methyl-D-erythritol.</text>
</comment>
<comment type="catalytic activity">
    <reaction evidence="1">
        <text>4-CDP-2-C-methyl-D-erythritol + ATP = 4-CDP-2-C-methyl-D-erythritol 2-phosphate + ADP + H(+)</text>
        <dbReference type="Rhea" id="RHEA:18437"/>
        <dbReference type="ChEBI" id="CHEBI:15378"/>
        <dbReference type="ChEBI" id="CHEBI:30616"/>
        <dbReference type="ChEBI" id="CHEBI:57823"/>
        <dbReference type="ChEBI" id="CHEBI:57919"/>
        <dbReference type="ChEBI" id="CHEBI:456216"/>
        <dbReference type="EC" id="2.7.1.148"/>
    </reaction>
</comment>
<comment type="pathway">
    <text evidence="1">Isoprenoid biosynthesis; isopentenyl diphosphate biosynthesis via DXP pathway; isopentenyl diphosphate from 1-deoxy-D-xylulose 5-phosphate: step 3/6.</text>
</comment>
<comment type="similarity">
    <text evidence="1">Belongs to the GHMP kinase family. IspE subfamily.</text>
</comment>
<organism>
    <name type="scientific">Clostridium kluyveri (strain ATCC 8527 / DSM 555 / NBRC 12016 / NCIMB 10680 / K1)</name>
    <dbReference type="NCBI Taxonomy" id="431943"/>
    <lineage>
        <taxon>Bacteria</taxon>
        <taxon>Bacillati</taxon>
        <taxon>Bacillota</taxon>
        <taxon>Clostridia</taxon>
        <taxon>Eubacteriales</taxon>
        <taxon>Clostridiaceae</taxon>
        <taxon>Clostridium</taxon>
    </lineage>
</organism>
<sequence>MLIKAYAKINLSLDVIGKREDGYHLLKMIMQTIDLYDLLNITPIEKGIEIKCNKSYIPCDKRNLVYKAVELFASNYGIKSGVSIDIIKNIPVAAGLAGGSSDAAAVLKVMRDIYIPELEYKDLIKLGTSIGADVPYCMIGGTALCQGIGEKVTSISSFKNHILVLVKPFFGVSTAEVYKSLDISKIKIHPNTDILINAINSGSLLKVSKNMKNVLENVTLKKHPLLRKIKNELIDFGALGALMSGSGPSIFAFFDDMLKAQICYDKMKTKYKEVFITRTV</sequence>
<gene>
    <name evidence="1" type="primary">ispE</name>
    <name type="ordered locus">CKL_3724</name>
</gene>
<dbReference type="EC" id="2.7.1.148" evidence="1"/>
<dbReference type="EMBL" id="CP000673">
    <property type="protein sequence ID" value="EDK35709.1"/>
    <property type="molecule type" value="Genomic_DNA"/>
</dbReference>
<dbReference type="RefSeq" id="WP_012104043.1">
    <property type="nucleotide sequence ID" value="NC_009706.1"/>
</dbReference>
<dbReference type="SMR" id="A5N3L3"/>
<dbReference type="STRING" id="431943.CKL_3724"/>
<dbReference type="KEGG" id="ckl:CKL_3724"/>
<dbReference type="eggNOG" id="COG1947">
    <property type="taxonomic scope" value="Bacteria"/>
</dbReference>
<dbReference type="HOGENOM" id="CLU_053057_1_1_9"/>
<dbReference type="UniPathway" id="UPA00056">
    <property type="reaction ID" value="UER00094"/>
</dbReference>
<dbReference type="Proteomes" id="UP000002411">
    <property type="component" value="Chromosome"/>
</dbReference>
<dbReference type="GO" id="GO:0050515">
    <property type="term" value="F:4-(cytidine 5'-diphospho)-2-C-methyl-D-erythritol kinase activity"/>
    <property type="evidence" value="ECO:0007669"/>
    <property type="project" value="UniProtKB-UniRule"/>
</dbReference>
<dbReference type="GO" id="GO:0005524">
    <property type="term" value="F:ATP binding"/>
    <property type="evidence" value="ECO:0007669"/>
    <property type="project" value="UniProtKB-UniRule"/>
</dbReference>
<dbReference type="GO" id="GO:0019288">
    <property type="term" value="P:isopentenyl diphosphate biosynthetic process, methylerythritol 4-phosphate pathway"/>
    <property type="evidence" value="ECO:0007669"/>
    <property type="project" value="UniProtKB-UniRule"/>
</dbReference>
<dbReference type="GO" id="GO:0016114">
    <property type="term" value="P:terpenoid biosynthetic process"/>
    <property type="evidence" value="ECO:0007669"/>
    <property type="project" value="InterPro"/>
</dbReference>
<dbReference type="Gene3D" id="3.30.230.10">
    <property type="match status" value="1"/>
</dbReference>
<dbReference type="Gene3D" id="3.30.70.890">
    <property type="entry name" value="GHMP kinase, C-terminal domain"/>
    <property type="match status" value="1"/>
</dbReference>
<dbReference type="HAMAP" id="MF_00061">
    <property type="entry name" value="IspE"/>
    <property type="match status" value="1"/>
</dbReference>
<dbReference type="InterPro" id="IPR013750">
    <property type="entry name" value="GHMP_kinase_C_dom"/>
</dbReference>
<dbReference type="InterPro" id="IPR036554">
    <property type="entry name" value="GHMP_kinase_C_sf"/>
</dbReference>
<dbReference type="InterPro" id="IPR006204">
    <property type="entry name" value="GHMP_kinase_N_dom"/>
</dbReference>
<dbReference type="InterPro" id="IPR004424">
    <property type="entry name" value="IspE"/>
</dbReference>
<dbReference type="InterPro" id="IPR020568">
    <property type="entry name" value="Ribosomal_Su5_D2-typ_SF"/>
</dbReference>
<dbReference type="InterPro" id="IPR014721">
    <property type="entry name" value="Ribsml_uS5_D2-typ_fold_subgr"/>
</dbReference>
<dbReference type="NCBIfam" id="TIGR00154">
    <property type="entry name" value="ispE"/>
    <property type="match status" value="1"/>
</dbReference>
<dbReference type="PANTHER" id="PTHR43527">
    <property type="entry name" value="4-DIPHOSPHOCYTIDYL-2-C-METHYL-D-ERYTHRITOL KINASE, CHLOROPLASTIC"/>
    <property type="match status" value="1"/>
</dbReference>
<dbReference type="PANTHER" id="PTHR43527:SF2">
    <property type="entry name" value="4-DIPHOSPHOCYTIDYL-2-C-METHYL-D-ERYTHRITOL KINASE, CHLOROPLASTIC"/>
    <property type="match status" value="1"/>
</dbReference>
<dbReference type="Pfam" id="PF08544">
    <property type="entry name" value="GHMP_kinases_C"/>
    <property type="match status" value="1"/>
</dbReference>
<dbReference type="Pfam" id="PF00288">
    <property type="entry name" value="GHMP_kinases_N"/>
    <property type="match status" value="1"/>
</dbReference>
<dbReference type="PIRSF" id="PIRSF010376">
    <property type="entry name" value="IspE"/>
    <property type="match status" value="1"/>
</dbReference>
<dbReference type="PRINTS" id="PR00958">
    <property type="entry name" value="HOMSERKINASE"/>
</dbReference>
<dbReference type="SUPFAM" id="SSF55060">
    <property type="entry name" value="GHMP Kinase, C-terminal domain"/>
    <property type="match status" value="1"/>
</dbReference>
<dbReference type="SUPFAM" id="SSF54211">
    <property type="entry name" value="Ribosomal protein S5 domain 2-like"/>
    <property type="match status" value="1"/>
</dbReference>
<reference key="1">
    <citation type="journal article" date="2008" name="Proc. Natl. Acad. Sci. U.S.A.">
        <title>The genome of Clostridium kluyveri, a strict anaerobe with unique metabolic features.</title>
        <authorList>
            <person name="Seedorf H."/>
            <person name="Fricke W.F."/>
            <person name="Veith B."/>
            <person name="Brueggemann H."/>
            <person name="Liesegang H."/>
            <person name="Strittmatter A."/>
            <person name="Miethke M."/>
            <person name="Buckel W."/>
            <person name="Hinderberger J."/>
            <person name="Li F."/>
            <person name="Hagemeier C."/>
            <person name="Thauer R.K."/>
            <person name="Gottschalk G."/>
        </authorList>
    </citation>
    <scope>NUCLEOTIDE SEQUENCE [LARGE SCALE GENOMIC DNA]</scope>
    <source>
        <strain>ATCC 8527 / DSM 555 / NBRC 12016 / NCIMB 10680 / K1</strain>
    </source>
</reference>
<name>ISPE_CLOK5</name>
<accession>A5N3L3</accession>